<dbReference type="EC" id="1.8.1.-" evidence="5"/>
<dbReference type="EMBL" id="BA000050">
    <property type="protein sequence ID" value="BAE56600.1"/>
    <property type="molecule type" value="Genomic_DNA"/>
</dbReference>
<dbReference type="RefSeq" id="XP_001818602.1">
    <property type="nucleotide sequence ID" value="XM_001818550.2"/>
</dbReference>
<dbReference type="SMR" id="Q2UPB5"/>
<dbReference type="STRING" id="510516.Q2UPB5"/>
<dbReference type="EnsemblFungi" id="BAE56600">
    <property type="protein sequence ID" value="BAE56600"/>
    <property type="gene ID" value="AO090001000037"/>
</dbReference>
<dbReference type="GeneID" id="5990573"/>
<dbReference type="KEGG" id="aor:AO090001000037"/>
<dbReference type="VEuPathDB" id="FungiDB:AO090001000037"/>
<dbReference type="HOGENOM" id="CLU_031864_5_0_1"/>
<dbReference type="OMA" id="TRGCFAT"/>
<dbReference type="OrthoDB" id="70311at5052"/>
<dbReference type="Proteomes" id="UP000006564">
    <property type="component" value="Chromosome 2"/>
</dbReference>
<dbReference type="GO" id="GO:0016491">
    <property type="term" value="F:oxidoreductase activity"/>
    <property type="evidence" value="ECO:0007669"/>
    <property type="project" value="UniProtKB-KW"/>
</dbReference>
<dbReference type="GO" id="GO:0097237">
    <property type="term" value="P:cellular response to toxic substance"/>
    <property type="evidence" value="ECO:0007669"/>
    <property type="project" value="UniProtKB-ARBA"/>
</dbReference>
<dbReference type="Gene3D" id="3.50.50.60">
    <property type="entry name" value="FAD/NAD(P)-binding domain"/>
    <property type="match status" value="2"/>
</dbReference>
<dbReference type="InterPro" id="IPR036188">
    <property type="entry name" value="FAD/NAD-bd_sf"/>
</dbReference>
<dbReference type="InterPro" id="IPR023753">
    <property type="entry name" value="FAD/NAD-binding_dom"/>
</dbReference>
<dbReference type="InterPro" id="IPR050097">
    <property type="entry name" value="Ferredoxin-NADP_redctase_2"/>
</dbReference>
<dbReference type="PANTHER" id="PTHR48105">
    <property type="entry name" value="THIOREDOXIN REDUCTASE 1-RELATED-RELATED"/>
    <property type="match status" value="1"/>
</dbReference>
<dbReference type="Pfam" id="PF07992">
    <property type="entry name" value="Pyr_redox_2"/>
    <property type="match status" value="1"/>
</dbReference>
<dbReference type="PRINTS" id="PR00368">
    <property type="entry name" value="FADPNR"/>
</dbReference>
<dbReference type="PRINTS" id="PR00469">
    <property type="entry name" value="PNDRDTASEII"/>
</dbReference>
<dbReference type="SUPFAM" id="SSF51905">
    <property type="entry name" value="FAD/NAD(P)-binding domain"/>
    <property type="match status" value="1"/>
</dbReference>
<accession>Q2UPB5</accession>
<name>ACLD_ASPOR</name>
<proteinExistence type="inferred from homology"/>
<gene>
    <name evidence="3" type="primary">aclD</name>
    <name type="ORF">AO090001000037</name>
</gene>
<protein>
    <recommendedName>
        <fullName evidence="3">Thioredoxin reductase aclD</fullName>
        <ecNumber evidence="5">1.8.1.-</ecNumber>
    </recommendedName>
    <alternativeName>
        <fullName evidence="3">Aspirochlorine biosynthesis protein D</fullName>
    </alternativeName>
</protein>
<reference key="1">
    <citation type="journal article" date="2005" name="Nature">
        <title>Genome sequencing and analysis of Aspergillus oryzae.</title>
        <authorList>
            <person name="Machida M."/>
            <person name="Asai K."/>
            <person name="Sano M."/>
            <person name="Tanaka T."/>
            <person name="Kumagai T."/>
            <person name="Terai G."/>
            <person name="Kusumoto K."/>
            <person name="Arima T."/>
            <person name="Akita O."/>
            <person name="Kashiwagi Y."/>
            <person name="Abe K."/>
            <person name="Gomi K."/>
            <person name="Horiuchi H."/>
            <person name="Kitamoto K."/>
            <person name="Kobayashi T."/>
            <person name="Takeuchi M."/>
            <person name="Denning D.W."/>
            <person name="Galagan J.E."/>
            <person name="Nierman W.C."/>
            <person name="Yu J."/>
            <person name="Archer D.B."/>
            <person name="Bennett J.W."/>
            <person name="Bhatnagar D."/>
            <person name="Cleveland T.E."/>
            <person name="Fedorova N.D."/>
            <person name="Gotoh O."/>
            <person name="Horikawa H."/>
            <person name="Hosoyama A."/>
            <person name="Ichinomiya M."/>
            <person name="Igarashi R."/>
            <person name="Iwashita K."/>
            <person name="Juvvadi P.R."/>
            <person name="Kato M."/>
            <person name="Kato Y."/>
            <person name="Kin T."/>
            <person name="Kokubun A."/>
            <person name="Maeda H."/>
            <person name="Maeyama N."/>
            <person name="Maruyama J."/>
            <person name="Nagasaki H."/>
            <person name="Nakajima T."/>
            <person name="Oda K."/>
            <person name="Okada K."/>
            <person name="Paulsen I."/>
            <person name="Sakamoto K."/>
            <person name="Sawano T."/>
            <person name="Takahashi M."/>
            <person name="Takase K."/>
            <person name="Terabayashi Y."/>
            <person name="Wortman J.R."/>
            <person name="Yamada O."/>
            <person name="Yamagata Y."/>
            <person name="Anazawa H."/>
            <person name="Hata Y."/>
            <person name="Koide Y."/>
            <person name="Komori T."/>
            <person name="Koyama Y."/>
            <person name="Minetoki T."/>
            <person name="Suharnan S."/>
            <person name="Tanaka A."/>
            <person name="Isono K."/>
            <person name="Kuhara S."/>
            <person name="Ogasawara N."/>
            <person name="Kikuchi H."/>
        </authorList>
    </citation>
    <scope>NUCLEOTIDE SEQUENCE [LARGE SCALE GENOMIC DNA]</scope>
    <source>
        <strain>ATCC 42149 / RIB 40</strain>
    </source>
</reference>
<reference key="2">
    <citation type="journal article" date="2014" name="Angew. Chem. Int. Ed.">
        <title>Biosynthesis of the halogenated mycotoxin aspirochlorine in koji mold involves a cryptic amino acid conversion.</title>
        <authorList>
            <person name="Chankhamjon P."/>
            <person name="Boettger-Schmidt D."/>
            <person name="Scherlach K."/>
            <person name="Urbansky B."/>
            <person name="Lackner G."/>
            <person name="Kalb D."/>
            <person name="Dahse H.M."/>
            <person name="Hoffmeister D."/>
            <person name="Hertweck C."/>
        </authorList>
    </citation>
    <scope>FUNCTION</scope>
    <scope>PATHWAY</scope>
</reference>
<evidence type="ECO:0000250" key="1">
    <source>
        <dbReference type="UniProtKB" id="E9RAH5"/>
    </source>
</evidence>
<evidence type="ECO:0000269" key="2">
    <source>
    </source>
</evidence>
<evidence type="ECO:0000303" key="3">
    <source>
    </source>
</evidence>
<evidence type="ECO:0000305" key="4"/>
<evidence type="ECO:0000305" key="5">
    <source>
    </source>
</evidence>
<feature type="chain" id="PRO_0000441209" description="Thioredoxin reductase aclD">
    <location>
        <begin position="1"/>
        <end position="314"/>
    </location>
</feature>
<feature type="binding site" evidence="1">
    <location>
        <begin position="13"/>
        <end position="16"/>
    </location>
    <ligand>
        <name>FAD</name>
        <dbReference type="ChEBI" id="CHEBI:57692"/>
    </ligand>
</feature>
<feature type="binding site" evidence="1">
    <location>
        <begin position="35"/>
        <end position="40"/>
    </location>
    <ligand>
        <name>FAD</name>
        <dbReference type="ChEBI" id="CHEBI:57692"/>
    </ligand>
</feature>
<feature type="binding site" evidence="1">
    <location>
        <position position="47"/>
    </location>
    <ligand>
        <name>FAD</name>
        <dbReference type="ChEBI" id="CHEBI:57692"/>
    </ligand>
</feature>
<feature type="binding site" evidence="1">
    <location>
        <position position="112"/>
    </location>
    <ligand>
        <name>FAD</name>
        <dbReference type="ChEBI" id="CHEBI:57692"/>
    </ligand>
</feature>
<feature type="binding site" evidence="1">
    <location>
        <position position="281"/>
    </location>
    <ligand>
        <name>FAD</name>
        <dbReference type="ChEBI" id="CHEBI:57692"/>
    </ligand>
</feature>
<feature type="binding site" evidence="1">
    <location>
        <begin position="288"/>
        <end position="289"/>
    </location>
    <ligand>
        <name>FAD</name>
        <dbReference type="ChEBI" id="CHEBI:57692"/>
    </ligand>
</feature>
<feature type="disulfide bond" description="Redox-active" evidence="1">
    <location>
        <begin position="136"/>
        <end position="139"/>
    </location>
</feature>
<organism>
    <name type="scientific">Aspergillus oryzae (strain ATCC 42149 / RIB 40)</name>
    <name type="common">Yellow koji mold</name>
    <dbReference type="NCBI Taxonomy" id="510516"/>
    <lineage>
        <taxon>Eukaryota</taxon>
        <taxon>Fungi</taxon>
        <taxon>Dikarya</taxon>
        <taxon>Ascomycota</taxon>
        <taxon>Pezizomycotina</taxon>
        <taxon>Eurotiomycetes</taxon>
        <taxon>Eurotiomycetidae</taxon>
        <taxon>Eurotiales</taxon>
        <taxon>Aspergillaceae</taxon>
        <taxon>Aspergillus</taxon>
        <taxon>Aspergillus subgen. Circumdati</taxon>
    </lineage>
</organism>
<sequence length="314" mass="34066">MAAPLFDCLIVGGGPAGLAAALGLCRAIRTAVVFDSKSYRNPTEHMHNVSTWDHANPHDYRLAARKELTEGRYNTVTLADVALRKIWKLDSGEFEATDAVGKVWKGRKLILATGVKDEIPELPGYADCWPKSIYHCLFCHGFEERGAPSVGVLAIGPVANPKPAEHLSRLAHNLAKTVTIYTNGNEELAAQLRPSIEKDQWLTLDNRVIKQLHKTDGIPVRVELDDGTTKEEGFLVHAMKTTPRLDFEHNLNLELSAQGTEFVASPPFSETTTPGCFATGDCGMAIKAASMSMSNGSLAAVGVVSQLAFDEKAK</sequence>
<keyword id="KW-1015">Disulfide bond</keyword>
<keyword id="KW-0274">FAD</keyword>
<keyword id="KW-0285">Flavoprotein</keyword>
<keyword id="KW-0560">Oxidoreductase</keyword>
<keyword id="KW-1185">Reference proteome</keyword>
<comment type="function">
    <text evidence="2">Thioredoxin reductase; part of the gene cluster that mediates the biosynthesis of aspirochlorine (or antibiotic A30641), an unusual halogenated spiro compound with distinctive antifungal properties due to selective inhibition of protein biosynthesis, and which is also active against bacteria, viruses, and murine tumor cells (PubMed:25302411). The non-ribosomal peptide synthetase (NRPS) aclP is responsible the formation of the diketopiperazine (DKP) core from the condensation of 2 phenylalanine residues (PubMed:25302411). One Phe residue is tailored into chlorotyrosine by hydroxylation and chlorination, whereas the second Phe undergoes an unprecedented C-C bond cleavage to be converted into glycine (PubMed:25302411). After formation of the DKP, sulfur is incorporated into the DKP by conjugation with glutathione by aclG, followed by its stepwise degradation to the thiol by aclI, aclJ and aclK, and the dithiol oxidation by aclT (PubMed:25302411). In addition, oxygenases (aclB, aclC, aclL and aclO) and O-methyltransferases (aclM and aclU) act as tailoring enzymes to produce the intermediate dechloroaspirochlorine (PubMed:25302411). Ultimately, chlorination of dechloroaspirochlorine by the halogenase aclH is the last step in the aspirochlorine pathway (PubMed:25302411).</text>
</comment>
<comment type="cofactor">
    <cofactor evidence="1">
        <name>FAD</name>
        <dbReference type="ChEBI" id="CHEBI:57692"/>
    </cofactor>
    <text evidence="1">Binds 1 FAD per subunit.</text>
</comment>
<comment type="pathway">
    <text evidence="5">Mycotoxin biosynthesis.</text>
</comment>
<comment type="subunit">
    <text evidence="1">Homodimer.</text>
</comment>
<comment type="similarity">
    <text evidence="4">Belongs to the class-II pyridine nucleotide-disulfide oxidoreductase family.</text>
</comment>